<keyword id="KW-0010">Activator</keyword>
<keyword id="KW-0175">Coiled coil</keyword>
<keyword id="KW-0539">Nucleus</keyword>
<keyword id="KW-1185">Reference proteome</keyword>
<keyword id="KW-0804">Transcription</keyword>
<keyword id="KW-0805">Transcription regulation</keyword>
<accession>A3KNK7</accession>
<proteinExistence type="evidence at transcript level"/>
<reference key="1">
    <citation type="submission" date="2007-03" db="EMBL/GenBank/DDBJ databases">
        <authorList>
            <consortium name="NIH - Zebrafish Gene Collection (ZGC) project"/>
        </authorList>
    </citation>
    <scope>NUCLEOTIDE SEQUENCE [LARGE SCALE MRNA]</scope>
</reference>
<reference key="2">
    <citation type="journal article" date="2022" name="Genet. Med.">
        <title>A homozygous MED11 C-terminal variant causes a lethal neurodegenerative disease.</title>
        <authorList>
            <consortium name="SYNaPS Study Group"/>
            <person name="Cali E."/>
            <person name="Lin S.J."/>
            <person name="Rocca C."/>
            <person name="Sahin Y."/>
            <person name="Al Shamsi A."/>
            <person name="El Chehadeh S."/>
            <person name="Chaabouni M."/>
            <person name="Mankad K."/>
            <person name="Galanaki E."/>
            <person name="Efthymiou S."/>
            <person name="Sudhakar S."/>
            <person name="Athanasiou-Fragkouli A."/>
            <person name="Celik T."/>
            <person name="Narli N."/>
            <person name="Bianca S."/>
            <person name="Murphy D."/>
            <person name="De Carvalho Moreira F.M."/>
            <person name="Accogli A."/>
            <person name="Petree C."/>
            <person name="Huang K."/>
            <person name="Monastiri K."/>
            <person name="Edizadeh M."/>
            <person name="Nardello R."/>
            <person name="Ognibene M."/>
            <person name="De Marco P."/>
            <person name="Ruggieri M."/>
            <person name="Zara F."/>
            <person name="Striano P."/>
            <person name="Sahin Y."/>
            <person name="Al-Gazali L."/>
            <person name="Abi Warde M.T."/>
            <person name="Gerard B."/>
            <person name="Zifarelli G."/>
            <person name="Beetz C."/>
            <person name="Fortuna S."/>
            <person name="Soler M."/>
            <person name="Valente E.M."/>
            <person name="Varshney G."/>
            <person name="Maroofian R."/>
            <person name="Salpietro V."/>
            <person name="Houlden H."/>
        </authorList>
    </citation>
    <scope>TISSUE SPECIFICITY</scope>
    <scope>DISRUPTION PHENOTYPE</scope>
</reference>
<organism>
    <name type="scientific">Danio rerio</name>
    <name type="common">Zebrafish</name>
    <name type="synonym">Brachydanio rerio</name>
    <dbReference type="NCBI Taxonomy" id="7955"/>
    <lineage>
        <taxon>Eukaryota</taxon>
        <taxon>Metazoa</taxon>
        <taxon>Chordata</taxon>
        <taxon>Craniata</taxon>
        <taxon>Vertebrata</taxon>
        <taxon>Euteleostomi</taxon>
        <taxon>Actinopterygii</taxon>
        <taxon>Neopterygii</taxon>
        <taxon>Teleostei</taxon>
        <taxon>Ostariophysi</taxon>
        <taxon>Cypriniformes</taxon>
        <taxon>Danionidae</taxon>
        <taxon>Danioninae</taxon>
        <taxon>Danio</taxon>
    </lineage>
</organism>
<protein>
    <recommendedName>
        <fullName>Mediator of RNA polymerase II transcription subunit 11</fullName>
    </recommendedName>
    <alternativeName>
        <fullName>Mediator complex subunit 11</fullName>
    </alternativeName>
</protein>
<evidence type="ECO:0000250" key="1"/>
<evidence type="ECO:0000250" key="2">
    <source>
        <dbReference type="UniProtKB" id="Q9P086"/>
    </source>
</evidence>
<evidence type="ECO:0000255" key="3"/>
<evidence type="ECO:0000269" key="4">
    <source>
    </source>
</evidence>
<evidence type="ECO:0000305" key="5"/>
<feature type="chain" id="PRO_0000304310" description="Mediator of RNA polymerase II transcription subunit 11">
    <location>
        <begin position="1"/>
        <end position="114"/>
    </location>
</feature>
<feature type="coiled-coil region" evidence="3">
    <location>
        <begin position="28"/>
        <end position="61"/>
    </location>
</feature>
<dbReference type="EMBL" id="BC133894">
    <property type="protein sequence ID" value="AAI33895.1"/>
    <property type="status" value="ALT_INIT"/>
    <property type="molecule type" value="mRNA"/>
</dbReference>
<dbReference type="RefSeq" id="NP_001153507.1">
    <property type="nucleotide sequence ID" value="NM_001160035.1"/>
</dbReference>
<dbReference type="RefSeq" id="XP_009303543.1">
    <property type="nucleotide sequence ID" value="XM_009305268.2"/>
</dbReference>
<dbReference type="SMR" id="A3KNK7"/>
<dbReference type="FunCoup" id="A3KNK7">
    <property type="interactions" value="1865"/>
</dbReference>
<dbReference type="STRING" id="7955.ENSDARP00000120505"/>
<dbReference type="PaxDb" id="7955-ENSDARP00000066153"/>
<dbReference type="PeptideAtlas" id="A3KNK7"/>
<dbReference type="GeneID" id="100148504"/>
<dbReference type="KEGG" id="dre:100148504"/>
<dbReference type="AGR" id="ZFIN:ZDB-GENE-091207-2"/>
<dbReference type="CTD" id="400569"/>
<dbReference type="ZFIN" id="ZDB-GENE-091207-2">
    <property type="gene designation" value="med11"/>
</dbReference>
<dbReference type="eggNOG" id="KOG4057">
    <property type="taxonomic scope" value="Eukaryota"/>
</dbReference>
<dbReference type="InParanoid" id="A3KNK7"/>
<dbReference type="OrthoDB" id="5418434at2759"/>
<dbReference type="PhylomeDB" id="A3KNK7"/>
<dbReference type="TreeFam" id="TF318328"/>
<dbReference type="PRO" id="PR:A3KNK7"/>
<dbReference type="Proteomes" id="UP000000437">
    <property type="component" value="Chromosome 10"/>
</dbReference>
<dbReference type="GO" id="GO:0016592">
    <property type="term" value="C:mediator complex"/>
    <property type="evidence" value="ECO:0000318"/>
    <property type="project" value="GO_Central"/>
</dbReference>
<dbReference type="GO" id="GO:0003712">
    <property type="term" value="F:transcription coregulator activity"/>
    <property type="evidence" value="ECO:0007669"/>
    <property type="project" value="InterPro"/>
</dbReference>
<dbReference type="GO" id="GO:0006357">
    <property type="term" value="P:regulation of transcription by RNA polymerase II"/>
    <property type="evidence" value="ECO:0007669"/>
    <property type="project" value="InterPro"/>
</dbReference>
<dbReference type="FunFam" id="1.10.287.3490:FF:000001">
    <property type="entry name" value="Mediator of RNA polymerase II transcription subunit 11"/>
    <property type="match status" value="1"/>
</dbReference>
<dbReference type="Gene3D" id="1.10.287.3490">
    <property type="match status" value="1"/>
</dbReference>
<dbReference type="InterPro" id="IPR019404">
    <property type="entry name" value="Mediator_Med11"/>
</dbReference>
<dbReference type="PANTHER" id="PTHR22890">
    <property type="entry name" value="MEDIATOR OF RNA POLYMERASE II TRANSCRIPTION SUBUNIT 11"/>
    <property type="match status" value="1"/>
</dbReference>
<dbReference type="Pfam" id="PF10280">
    <property type="entry name" value="Med11"/>
    <property type="match status" value="1"/>
</dbReference>
<sequence>MANDRLRALEDVEKEIALVLQSAGTIVLELSKEKANASLLDRQLNQFQTSINRVESELSSQIRYLTQVATGQPHEGSTYSARKDCQMALNRAEYARVKLGELGRTCEMMLDPQT</sequence>
<name>MED11_DANRE</name>
<comment type="function">
    <text evidence="2">Component of the Mediator complex, a coactivator involved in the regulated transcription of nearly all RNA polymerase II-dependent genes. Mediator functions as a bridge to convey information from gene-specific regulatory proteins to the basal RNA polymerase II transcription machinery. Mediator is recruited to promoters by direct interactions with regulatory proteins and serves as a scaffold for the assembly of a functional pre-initiation complex with RNA polymerase II and the general transcription factors (By similarity).</text>
</comment>
<comment type="subunit">
    <text evidence="1">Component of the Mediator complex.</text>
</comment>
<comment type="subcellular location">
    <subcellularLocation>
        <location evidence="5">Nucleus</location>
    </subcellularLocation>
</comment>
<comment type="tissue specificity">
    <text evidence="4">Ubiquitously expressed at early stage of development. After fertilization expressed in head region as well as in lateral line primordium.</text>
</comment>
<comment type="disruption phenotype">
    <text evidence="4">Knockout embryos do not show any morphologic abnormalities at early stage of development. Small eyes, small brain (microcephaly), and heart edema are observed in mutant animals after fertilization. Mutant fishes show also reduced response to sound stimulus, suggesting compromised hearing, and increased movement after light stimulus, indicating compromised brain function. Decreased survival is noticed compared to controls.</text>
</comment>
<comment type="similarity">
    <text evidence="5">Belongs to the Mediator complex subunit 11 family.</text>
</comment>
<comment type="sequence caution" evidence="5">
    <conflict type="erroneous initiation">
        <sequence resource="EMBL-CDS" id="AAI33895"/>
    </conflict>
    <text>Extended N-terminus.</text>
</comment>
<gene>
    <name type="primary">med11</name>
</gene>